<name>NTPPA_SHIBS</name>
<organism>
    <name type="scientific">Shigella boydii serotype 4 (strain Sb227)</name>
    <dbReference type="NCBI Taxonomy" id="300268"/>
    <lineage>
        <taxon>Bacteria</taxon>
        <taxon>Pseudomonadati</taxon>
        <taxon>Pseudomonadota</taxon>
        <taxon>Gammaproteobacteria</taxon>
        <taxon>Enterobacterales</taxon>
        <taxon>Enterobacteriaceae</taxon>
        <taxon>Shigella</taxon>
    </lineage>
</organism>
<reference key="1">
    <citation type="journal article" date="2005" name="Nucleic Acids Res.">
        <title>Genome dynamics and diversity of Shigella species, the etiologic agents of bacillary dysentery.</title>
        <authorList>
            <person name="Yang F."/>
            <person name="Yang J."/>
            <person name="Zhang X."/>
            <person name="Chen L."/>
            <person name="Jiang Y."/>
            <person name="Yan Y."/>
            <person name="Tang X."/>
            <person name="Wang J."/>
            <person name="Xiong Z."/>
            <person name="Dong J."/>
            <person name="Xue Y."/>
            <person name="Zhu Y."/>
            <person name="Xu X."/>
            <person name="Sun L."/>
            <person name="Chen S."/>
            <person name="Nie H."/>
            <person name="Peng J."/>
            <person name="Xu J."/>
            <person name="Wang Y."/>
            <person name="Yuan Z."/>
            <person name="Wen Y."/>
            <person name="Yao Z."/>
            <person name="Shen Y."/>
            <person name="Qiang B."/>
            <person name="Hou Y."/>
            <person name="Yu J."/>
            <person name="Jin Q."/>
        </authorList>
    </citation>
    <scope>NUCLEOTIDE SEQUENCE [LARGE SCALE GENOMIC DNA]</scope>
    <source>
        <strain>Sb227</strain>
    </source>
</reference>
<proteinExistence type="inferred from homology"/>
<keyword id="KW-0963">Cytoplasm</keyword>
<keyword id="KW-0378">Hydrolase</keyword>
<keyword id="KW-0546">Nucleotide metabolism</keyword>
<dbReference type="EC" id="3.6.1.9" evidence="1"/>
<dbReference type="EMBL" id="CP000036">
    <property type="protein sequence ID" value="ABB67642.1"/>
    <property type="molecule type" value="Genomic_DNA"/>
</dbReference>
<dbReference type="SMR" id="Q31WB6"/>
<dbReference type="KEGG" id="sbo:SBO_3140"/>
<dbReference type="HOGENOM" id="CLU_040416_2_1_6"/>
<dbReference type="Proteomes" id="UP000007067">
    <property type="component" value="Chromosome"/>
</dbReference>
<dbReference type="GO" id="GO:0005737">
    <property type="term" value="C:cytoplasm"/>
    <property type="evidence" value="ECO:0007669"/>
    <property type="project" value="UniProtKB-SubCell"/>
</dbReference>
<dbReference type="GO" id="GO:0036218">
    <property type="term" value="F:dTTP diphosphatase activity"/>
    <property type="evidence" value="ECO:0007669"/>
    <property type="project" value="RHEA"/>
</dbReference>
<dbReference type="GO" id="GO:0036221">
    <property type="term" value="F:UTP diphosphatase activity"/>
    <property type="evidence" value="ECO:0007669"/>
    <property type="project" value="RHEA"/>
</dbReference>
<dbReference type="GO" id="GO:0009117">
    <property type="term" value="P:nucleotide metabolic process"/>
    <property type="evidence" value="ECO:0007669"/>
    <property type="project" value="UniProtKB-KW"/>
</dbReference>
<dbReference type="CDD" id="cd00555">
    <property type="entry name" value="Maf"/>
    <property type="match status" value="1"/>
</dbReference>
<dbReference type="FunFam" id="3.90.950.10:FF:000004">
    <property type="entry name" value="dTTP/UTP pyrophosphatase"/>
    <property type="match status" value="1"/>
</dbReference>
<dbReference type="Gene3D" id="3.90.950.10">
    <property type="match status" value="1"/>
</dbReference>
<dbReference type="HAMAP" id="MF_00528">
    <property type="entry name" value="Maf"/>
    <property type="match status" value="1"/>
</dbReference>
<dbReference type="InterPro" id="IPR029001">
    <property type="entry name" value="ITPase-like_fam"/>
</dbReference>
<dbReference type="InterPro" id="IPR003697">
    <property type="entry name" value="Maf-like"/>
</dbReference>
<dbReference type="NCBIfam" id="TIGR00172">
    <property type="entry name" value="maf"/>
    <property type="match status" value="1"/>
</dbReference>
<dbReference type="PANTHER" id="PTHR43213">
    <property type="entry name" value="BIFUNCTIONAL DTTP/UTP PYROPHOSPHATASE/METHYLTRANSFERASE PROTEIN-RELATED"/>
    <property type="match status" value="1"/>
</dbReference>
<dbReference type="PANTHER" id="PTHR43213:SF5">
    <property type="entry name" value="BIFUNCTIONAL DTTP_UTP PYROPHOSPHATASE_METHYLTRANSFERASE PROTEIN-RELATED"/>
    <property type="match status" value="1"/>
</dbReference>
<dbReference type="Pfam" id="PF02545">
    <property type="entry name" value="Maf"/>
    <property type="match status" value="1"/>
</dbReference>
<dbReference type="PIRSF" id="PIRSF006305">
    <property type="entry name" value="Maf"/>
    <property type="match status" value="1"/>
</dbReference>
<dbReference type="SUPFAM" id="SSF52972">
    <property type="entry name" value="ITPase-like"/>
    <property type="match status" value="1"/>
</dbReference>
<accession>Q31WB6</accession>
<gene>
    <name type="primary">yceF2</name>
    <name type="ordered locus">SBO_3140</name>
</gene>
<comment type="function">
    <text evidence="1">Nucleoside triphosphate pyrophosphatase that hydrolyzes dTTP and UTP. May have a dual role in cell division arrest and in preventing the incorporation of modified nucleotides into cellular nucleic acids.</text>
</comment>
<comment type="catalytic activity">
    <reaction evidence="1">
        <text>dTTP + H2O = dTMP + diphosphate + H(+)</text>
        <dbReference type="Rhea" id="RHEA:28534"/>
        <dbReference type="ChEBI" id="CHEBI:15377"/>
        <dbReference type="ChEBI" id="CHEBI:15378"/>
        <dbReference type="ChEBI" id="CHEBI:33019"/>
        <dbReference type="ChEBI" id="CHEBI:37568"/>
        <dbReference type="ChEBI" id="CHEBI:63528"/>
        <dbReference type="EC" id="3.6.1.9"/>
    </reaction>
</comment>
<comment type="catalytic activity">
    <reaction evidence="1">
        <text>UTP + H2O = UMP + diphosphate + H(+)</text>
        <dbReference type="Rhea" id="RHEA:29395"/>
        <dbReference type="ChEBI" id="CHEBI:15377"/>
        <dbReference type="ChEBI" id="CHEBI:15378"/>
        <dbReference type="ChEBI" id="CHEBI:33019"/>
        <dbReference type="ChEBI" id="CHEBI:46398"/>
        <dbReference type="ChEBI" id="CHEBI:57865"/>
        <dbReference type="EC" id="3.6.1.9"/>
    </reaction>
</comment>
<comment type="cofactor">
    <cofactor evidence="1">
        <name>a divalent metal cation</name>
        <dbReference type="ChEBI" id="CHEBI:60240"/>
    </cofactor>
</comment>
<comment type="subcellular location">
    <subcellularLocation>
        <location evidence="1">Cytoplasm</location>
    </subcellularLocation>
</comment>
<comment type="similarity">
    <text evidence="1">Belongs to the Maf family. YhdE subfamily.</text>
</comment>
<evidence type="ECO:0000255" key="1">
    <source>
        <dbReference type="HAMAP-Rule" id="MF_00528"/>
    </source>
</evidence>
<protein>
    <recommendedName>
        <fullName evidence="1">dTTP/UTP pyrophosphatase</fullName>
        <shortName evidence="1">dTTPase/UTPase</shortName>
        <ecNumber evidence="1">3.6.1.9</ecNumber>
    </recommendedName>
    <alternativeName>
        <fullName evidence="1">Nucleoside triphosphate pyrophosphatase</fullName>
    </alternativeName>
    <alternativeName>
        <fullName evidence="1">Nucleotide pyrophosphatase</fullName>
        <shortName evidence="1">Nucleotide PPase</shortName>
    </alternativeName>
</protein>
<sequence>MTSLYLASGSPRRQELLAQLGVTFERIVTGIEEQRQPQESAQQYVVRLAHKKAQAGVAQTAQDLPVLGADTIVILNGEVLEKPRDAEHAAQMLRKLSGQTHQVMTAVVLADSQHILDCLVVTDVTFRTLTDEDIAGYVASGEPLDKAGAYGIQGLGGCFVRKINGSYHAVVGLPLVETYELLSNFNALREKRDKHDG</sequence>
<feature type="chain" id="PRO_0000267432" description="dTTP/UTP pyrophosphatase">
    <location>
        <begin position="1"/>
        <end position="197"/>
    </location>
</feature>
<feature type="active site" description="Proton acceptor" evidence="1">
    <location>
        <position position="70"/>
    </location>
</feature>
<feature type="site" description="Important for substrate specificity" evidence="1">
    <location>
        <position position="12"/>
    </location>
</feature>
<feature type="site" description="Important for substrate specificity" evidence="1">
    <location>
        <position position="71"/>
    </location>
</feature>
<feature type="site" description="Important for substrate specificity" evidence="1">
    <location>
        <position position="153"/>
    </location>
</feature>